<feature type="chain" id="PRO_0000276489" description="Large ribosomal subunit protein bL32c">
    <location>
        <begin position="1"/>
        <end position="57"/>
    </location>
</feature>
<feature type="region of interest" description="Disordered" evidence="2">
    <location>
        <begin position="1"/>
        <end position="21"/>
    </location>
</feature>
<evidence type="ECO:0000255" key="1">
    <source>
        <dbReference type="HAMAP-Rule" id="MF_00340"/>
    </source>
</evidence>
<evidence type="ECO:0000256" key="2">
    <source>
        <dbReference type="SAM" id="MobiDB-lite"/>
    </source>
</evidence>
<evidence type="ECO:0000305" key="3"/>
<keyword id="KW-0150">Chloroplast</keyword>
<keyword id="KW-0934">Plastid</keyword>
<keyword id="KW-0687">Ribonucleoprotein</keyword>
<keyword id="KW-0689">Ribosomal protein</keyword>
<sequence>MAVPKKRTSKSKKNLRKNTWKKKVLKRAMRALFIAKLDLNNLQDNVATLEDSNETSS</sequence>
<dbReference type="EMBL" id="DQ630521">
    <property type="protein sequence ID" value="ABF60186.1"/>
    <property type="molecule type" value="Genomic_DNA"/>
</dbReference>
<dbReference type="RefSeq" id="YP_764411.1">
    <property type="nucleotide sequence ID" value="NC_008372.1"/>
</dbReference>
<dbReference type="SMR" id="Q06SF5"/>
<dbReference type="GeneID" id="4308366"/>
<dbReference type="GO" id="GO:0009507">
    <property type="term" value="C:chloroplast"/>
    <property type="evidence" value="ECO:0007669"/>
    <property type="project" value="UniProtKB-SubCell"/>
</dbReference>
<dbReference type="GO" id="GO:0015934">
    <property type="term" value="C:large ribosomal subunit"/>
    <property type="evidence" value="ECO:0007669"/>
    <property type="project" value="InterPro"/>
</dbReference>
<dbReference type="GO" id="GO:0003735">
    <property type="term" value="F:structural constituent of ribosome"/>
    <property type="evidence" value="ECO:0007669"/>
    <property type="project" value="InterPro"/>
</dbReference>
<dbReference type="GO" id="GO:0006412">
    <property type="term" value="P:translation"/>
    <property type="evidence" value="ECO:0007669"/>
    <property type="project" value="UniProtKB-UniRule"/>
</dbReference>
<dbReference type="HAMAP" id="MF_00340">
    <property type="entry name" value="Ribosomal_bL32"/>
    <property type="match status" value="1"/>
</dbReference>
<dbReference type="InterPro" id="IPR002677">
    <property type="entry name" value="Ribosomal_bL32"/>
</dbReference>
<dbReference type="InterPro" id="IPR011332">
    <property type="entry name" value="Ribosomal_zn-bd"/>
</dbReference>
<dbReference type="Pfam" id="PF01783">
    <property type="entry name" value="Ribosomal_L32p"/>
    <property type="match status" value="1"/>
</dbReference>
<dbReference type="SUPFAM" id="SSF57829">
    <property type="entry name" value="Zn-binding ribosomal proteins"/>
    <property type="match status" value="1"/>
</dbReference>
<gene>
    <name evidence="1" type="primary">rpl32</name>
</gene>
<protein>
    <recommendedName>
        <fullName evidence="1">Large ribosomal subunit protein bL32c</fullName>
    </recommendedName>
    <alternativeName>
        <fullName evidence="3">50S ribosomal protein L32, chloroplastic</fullName>
    </alternativeName>
</protein>
<proteinExistence type="inferred from homology"/>
<geneLocation type="chloroplast"/>
<comment type="subcellular location">
    <subcellularLocation>
        <location>Plastid</location>
        <location>Chloroplast</location>
    </subcellularLocation>
</comment>
<comment type="similarity">
    <text evidence="1">Belongs to the bacterial ribosomal protein bL32 family.</text>
</comment>
<accession>Q06SF5</accession>
<organism>
    <name type="scientific">Stigeoclonium helveticum</name>
    <name type="common">Green alga</name>
    <dbReference type="NCBI Taxonomy" id="55999"/>
    <lineage>
        <taxon>Eukaryota</taxon>
        <taxon>Viridiplantae</taxon>
        <taxon>Chlorophyta</taxon>
        <taxon>core chlorophytes</taxon>
        <taxon>Chlorophyceae</taxon>
        <taxon>OCC clade</taxon>
        <taxon>Chaetophorales</taxon>
        <taxon>Chaetophoraceae</taxon>
        <taxon>Stigeoclonium</taxon>
    </lineage>
</organism>
<name>RK32_STIHE</name>
<reference key="1">
    <citation type="journal article" date="2006" name="Mol. Genet. Genomics">
        <title>Distinctive architecture of the chloroplast genome in the chlorophycean green alga Stigeoclonium helveticum.</title>
        <authorList>
            <person name="Belanger A.-S."/>
            <person name="Brouard J.-S."/>
            <person name="Charlebois P."/>
            <person name="Otis C."/>
            <person name="Lemieux C."/>
            <person name="Turmel M."/>
        </authorList>
    </citation>
    <scope>NUCLEOTIDE SEQUENCE [LARGE SCALE GENOMIC DNA]</scope>
    <source>
        <strain>UTEX 441</strain>
    </source>
</reference>